<gene>
    <name type="primary">rps8</name>
</gene>
<geneLocation type="chloroplast"/>
<proteinExistence type="inferred from homology"/>
<comment type="function">
    <text evidence="1">One of the primary rRNA binding proteins, it binds directly to 16S rRNA central domain where it helps coordinate assembly of the platform of the 30S subunit.</text>
</comment>
<comment type="subunit">
    <text evidence="1">Part of the 30S ribosomal subunit.</text>
</comment>
<comment type="subcellular location">
    <subcellularLocation>
        <location>Plastid</location>
        <location>Chloroplast</location>
    </subcellularLocation>
</comment>
<comment type="similarity">
    <text evidence="2">Belongs to the universal ribosomal protein uS8 family.</text>
</comment>
<sequence>MVNDSISDMLTRLRNAICAQHKVVQVPLTNINKNILKVLQKEGYIKNFEILFERKSGYLLVSLKYNSLNQDKPCLSVLKKISRPGLRMYVRTKKIPKVLGGTGIAIISTSKGVMTGSIARNLGIGGEILCYIW</sequence>
<organism>
    <name type="scientific">Cyanidium caldarium</name>
    <name type="common">Red alga</name>
    <dbReference type="NCBI Taxonomy" id="2771"/>
    <lineage>
        <taxon>Eukaryota</taxon>
        <taxon>Rhodophyta</taxon>
        <taxon>Bangiophyceae</taxon>
        <taxon>Cyanidiales</taxon>
        <taxon>Cyanidiaceae</taxon>
        <taxon>Cyanidium</taxon>
    </lineage>
</organism>
<dbReference type="EMBL" id="AF022186">
    <property type="protein sequence ID" value="AAF12920.1"/>
    <property type="molecule type" value="Genomic_DNA"/>
</dbReference>
<dbReference type="RefSeq" id="NP_045174.1">
    <property type="nucleotide sequence ID" value="NC_001840.1"/>
</dbReference>
<dbReference type="SMR" id="Q9TLU5"/>
<dbReference type="GeneID" id="800217"/>
<dbReference type="GO" id="GO:0009507">
    <property type="term" value="C:chloroplast"/>
    <property type="evidence" value="ECO:0007669"/>
    <property type="project" value="UniProtKB-SubCell"/>
</dbReference>
<dbReference type="GO" id="GO:1990904">
    <property type="term" value="C:ribonucleoprotein complex"/>
    <property type="evidence" value="ECO:0007669"/>
    <property type="project" value="UniProtKB-KW"/>
</dbReference>
<dbReference type="GO" id="GO:0005840">
    <property type="term" value="C:ribosome"/>
    <property type="evidence" value="ECO:0007669"/>
    <property type="project" value="UniProtKB-KW"/>
</dbReference>
<dbReference type="GO" id="GO:0019843">
    <property type="term" value="F:rRNA binding"/>
    <property type="evidence" value="ECO:0007669"/>
    <property type="project" value="UniProtKB-UniRule"/>
</dbReference>
<dbReference type="GO" id="GO:0003735">
    <property type="term" value="F:structural constituent of ribosome"/>
    <property type="evidence" value="ECO:0007669"/>
    <property type="project" value="InterPro"/>
</dbReference>
<dbReference type="GO" id="GO:0006412">
    <property type="term" value="P:translation"/>
    <property type="evidence" value="ECO:0007669"/>
    <property type="project" value="UniProtKB-UniRule"/>
</dbReference>
<dbReference type="FunFam" id="3.30.1370.30:FF:000002">
    <property type="entry name" value="30S ribosomal protein S8"/>
    <property type="match status" value="1"/>
</dbReference>
<dbReference type="FunFam" id="3.30.1490.10:FF:000001">
    <property type="entry name" value="30S ribosomal protein S8"/>
    <property type="match status" value="1"/>
</dbReference>
<dbReference type="Gene3D" id="3.30.1370.30">
    <property type="match status" value="1"/>
</dbReference>
<dbReference type="Gene3D" id="3.30.1490.10">
    <property type="match status" value="1"/>
</dbReference>
<dbReference type="HAMAP" id="MF_01302_B">
    <property type="entry name" value="Ribosomal_uS8_B"/>
    <property type="match status" value="1"/>
</dbReference>
<dbReference type="InterPro" id="IPR000630">
    <property type="entry name" value="Ribosomal_uS8"/>
</dbReference>
<dbReference type="InterPro" id="IPR047863">
    <property type="entry name" value="Ribosomal_uS8_CS"/>
</dbReference>
<dbReference type="InterPro" id="IPR035987">
    <property type="entry name" value="Ribosomal_uS8_sf"/>
</dbReference>
<dbReference type="NCBIfam" id="NF001109">
    <property type="entry name" value="PRK00136.1"/>
    <property type="match status" value="1"/>
</dbReference>
<dbReference type="PANTHER" id="PTHR11758">
    <property type="entry name" value="40S RIBOSOMAL PROTEIN S15A"/>
    <property type="match status" value="1"/>
</dbReference>
<dbReference type="Pfam" id="PF00410">
    <property type="entry name" value="Ribosomal_S8"/>
    <property type="match status" value="1"/>
</dbReference>
<dbReference type="SUPFAM" id="SSF56047">
    <property type="entry name" value="Ribosomal protein S8"/>
    <property type="match status" value="1"/>
</dbReference>
<dbReference type="PROSITE" id="PS00053">
    <property type="entry name" value="RIBOSOMAL_S8"/>
    <property type="match status" value="1"/>
</dbReference>
<protein>
    <recommendedName>
        <fullName evidence="2">Small ribosomal subunit protein uS8c</fullName>
    </recommendedName>
    <alternativeName>
        <fullName>30S ribosomal protein S8, chloroplastic</fullName>
    </alternativeName>
</protein>
<reference key="1">
    <citation type="journal article" date="2000" name="J. Mol. Evol.">
        <title>The structure and gene repertoire of an ancient red algal plastid genome.</title>
        <authorList>
            <person name="Gloeckner G."/>
            <person name="Rosenthal A."/>
            <person name="Valentin K.-U."/>
        </authorList>
    </citation>
    <scope>NUCLEOTIDE SEQUENCE [LARGE SCALE GENOMIC DNA]</scope>
    <source>
        <strain>RK-1</strain>
    </source>
</reference>
<name>RR8_CYACA</name>
<feature type="chain" id="PRO_0000126568" description="Small ribosomal subunit protein uS8c">
    <location>
        <begin position="1"/>
        <end position="133"/>
    </location>
</feature>
<evidence type="ECO:0000250" key="1"/>
<evidence type="ECO:0000305" key="2"/>
<accession>Q9TLU5</accession>
<keyword id="KW-0150">Chloroplast</keyword>
<keyword id="KW-0934">Plastid</keyword>
<keyword id="KW-0687">Ribonucleoprotein</keyword>
<keyword id="KW-0689">Ribosomal protein</keyword>
<keyword id="KW-0694">RNA-binding</keyword>
<keyword id="KW-0699">rRNA-binding</keyword>